<sequence length="569" mass="61806">MAYKIDRKTYAQTYGPTAGDRVRLADTELFIEVEKDLTTYGDEVKFGGGKVIRDGMGQSQVRRADGAVDTVITNALIVDWWGIIKADVGIKDGMIFEIGKAGNPDIQDNVDIVIGASTEVIAGEGHILTAGSIDTHIHFICPQQIETALASGITTMLGGGTGPATGTNATTCTPGSFHISRMLQSAEAFPMNLGFYGKGNSTNESNLIDQVEAGACGLKLHEDWGTTPSTINSCLNIADKFDVQVCIHTDTLNEAGFVEDTINAIAGRTIHTFHTEGAGGGHAPDIIKICGEKNVLPSSTNPTRPYTRNTLEEHLDMLMVCHHLDSKIPEDIAFAESRIRRETIAAEDILHDIGAFSVIASDSQAMGRVGEVITRTFQTAHKMKVQRGPLMQDSDRNDNYRVKRYISKVTINPAIAHGIDKHVGSIEKGKIADLVLWKPSFFAVKPELVVKGGSIVWSQMGDANASIPTPGPVHGRPMFASFGQSLIKSSFTFLSKNSIDQNIPNKLSLQKKCIAVENTRNINKSHLKLNSKLPNILVDPQTYEVFSDGELLTCEPLDEVPMAQRYFLL</sequence>
<accession>A8G4K9</accession>
<feature type="chain" id="PRO_1000070681" description="Urease subunit alpha">
    <location>
        <begin position="1"/>
        <end position="569"/>
    </location>
</feature>
<feature type="domain" description="Urease" evidence="1">
    <location>
        <begin position="131"/>
        <end position="569"/>
    </location>
</feature>
<feature type="active site" description="Proton donor" evidence="1">
    <location>
        <position position="322"/>
    </location>
</feature>
<feature type="binding site" evidence="1">
    <location>
        <position position="136"/>
    </location>
    <ligand>
        <name>Ni(2+)</name>
        <dbReference type="ChEBI" id="CHEBI:49786"/>
        <label>1</label>
    </ligand>
</feature>
<feature type="binding site" evidence="1">
    <location>
        <position position="138"/>
    </location>
    <ligand>
        <name>Ni(2+)</name>
        <dbReference type="ChEBI" id="CHEBI:49786"/>
        <label>1</label>
    </ligand>
</feature>
<feature type="binding site" description="via carbamate group" evidence="1">
    <location>
        <position position="219"/>
    </location>
    <ligand>
        <name>Ni(2+)</name>
        <dbReference type="ChEBI" id="CHEBI:49786"/>
        <label>1</label>
    </ligand>
</feature>
<feature type="binding site" description="via carbamate group" evidence="1">
    <location>
        <position position="219"/>
    </location>
    <ligand>
        <name>Ni(2+)</name>
        <dbReference type="ChEBI" id="CHEBI:49786"/>
        <label>2</label>
    </ligand>
</feature>
<feature type="binding site" evidence="1">
    <location>
        <position position="221"/>
    </location>
    <ligand>
        <name>substrate</name>
    </ligand>
</feature>
<feature type="binding site" evidence="1">
    <location>
        <position position="248"/>
    </location>
    <ligand>
        <name>Ni(2+)</name>
        <dbReference type="ChEBI" id="CHEBI:49786"/>
        <label>2</label>
    </ligand>
</feature>
<feature type="binding site" evidence="1">
    <location>
        <position position="274"/>
    </location>
    <ligand>
        <name>Ni(2+)</name>
        <dbReference type="ChEBI" id="CHEBI:49786"/>
        <label>2</label>
    </ligand>
</feature>
<feature type="binding site" evidence="1">
    <location>
        <position position="362"/>
    </location>
    <ligand>
        <name>Ni(2+)</name>
        <dbReference type="ChEBI" id="CHEBI:49786"/>
        <label>1</label>
    </ligand>
</feature>
<feature type="modified residue" description="N6-carboxylysine" evidence="1">
    <location>
        <position position="219"/>
    </location>
</feature>
<dbReference type="EC" id="3.5.1.5" evidence="1"/>
<dbReference type="EMBL" id="CP000825">
    <property type="protein sequence ID" value="ABV50540.1"/>
    <property type="molecule type" value="Genomic_DNA"/>
</dbReference>
<dbReference type="RefSeq" id="WP_012007635.1">
    <property type="nucleotide sequence ID" value="NC_009840.1"/>
</dbReference>
<dbReference type="SMR" id="A8G4K9"/>
<dbReference type="STRING" id="93060.P9215_09251"/>
<dbReference type="KEGG" id="pmh:P9215_09251"/>
<dbReference type="eggNOG" id="COG0804">
    <property type="taxonomic scope" value="Bacteria"/>
</dbReference>
<dbReference type="HOGENOM" id="CLU_000980_0_0_3"/>
<dbReference type="OrthoDB" id="9802793at2"/>
<dbReference type="UniPathway" id="UPA00258">
    <property type="reaction ID" value="UER00370"/>
</dbReference>
<dbReference type="Proteomes" id="UP000002014">
    <property type="component" value="Chromosome"/>
</dbReference>
<dbReference type="GO" id="GO:0005737">
    <property type="term" value="C:cytoplasm"/>
    <property type="evidence" value="ECO:0007669"/>
    <property type="project" value="UniProtKB-SubCell"/>
</dbReference>
<dbReference type="GO" id="GO:0016151">
    <property type="term" value="F:nickel cation binding"/>
    <property type="evidence" value="ECO:0007669"/>
    <property type="project" value="UniProtKB-UniRule"/>
</dbReference>
<dbReference type="GO" id="GO:0009039">
    <property type="term" value="F:urease activity"/>
    <property type="evidence" value="ECO:0007669"/>
    <property type="project" value="UniProtKB-UniRule"/>
</dbReference>
<dbReference type="GO" id="GO:0043419">
    <property type="term" value="P:urea catabolic process"/>
    <property type="evidence" value="ECO:0007669"/>
    <property type="project" value="UniProtKB-UniRule"/>
</dbReference>
<dbReference type="CDD" id="cd00375">
    <property type="entry name" value="Urease_alpha"/>
    <property type="match status" value="1"/>
</dbReference>
<dbReference type="Gene3D" id="3.20.20.140">
    <property type="entry name" value="Metal-dependent hydrolases"/>
    <property type="match status" value="1"/>
</dbReference>
<dbReference type="Gene3D" id="2.30.40.10">
    <property type="entry name" value="Urease, subunit C, domain 1"/>
    <property type="match status" value="1"/>
</dbReference>
<dbReference type="HAMAP" id="MF_01953">
    <property type="entry name" value="Urease_alpha"/>
    <property type="match status" value="1"/>
</dbReference>
<dbReference type="InterPro" id="IPR006680">
    <property type="entry name" value="Amidohydro-rel"/>
</dbReference>
<dbReference type="InterPro" id="IPR011059">
    <property type="entry name" value="Metal-dep_hydrolase_composite"/>
</dbReference>
<dbReference type="InterPro" id="IPR032466">
    <property type="entry name" value="Metal_Hydrolase"/>
</dbReference>
<dbReference type="InterPro" id="IPR011612">
    <property type="entry name" value="Urease_alpha_N_dom"/>
</dbReference>
<dbReference type="InterPro" id="IPR050112">
    <property type="entry name" value="Urease_alpha_subunit"/>
</dbReference>
<dbReference type="InterPro" id="IPR017950">
    <property type="entry name" value="Urease_AS"/>
</dbReference>
<dbReference type="InterPro" id="IPR005848">
    <property type="entry name" value="Urease_asu"/>
</dbReference>
<dbReference type="InterPro" id="IPR017951">
    <property type="entry name" value="Urease_asu_c"/>
</dbReference>
<dbReference type="NCBIfam" id="NF009685">
    <property type="entry name" value="PRK13206.1"/>
    <property type="match status" value="1"/>
</dbReference>
<dbReference type="NCBIfam" id="NF009686">
    <property type="entry name" value="PRK13207.1"/>
    <property type="match status" value="1"/>
</dbReference>
<dbReference type="NCBIfam" id="TIGR01792">
    <property type="entry name" value="urease_alph"/>
    <property type="match status" value="1"/>
</dbReference>
<dbReference type="PANTHER" id="PTHR43440">
    <property type="entry name" value="UREASE"/>
    <property type="match status" value="1"/>
</dbReference>
<dbReference type="PANTHER" id="PTHR43440:SF1">
    <property type="entry name" value="UREASE"/>
    <property type="match status" value="1"/>
</dbReference>
<dbReference type="Pfam" id="PF01979">
    <property type="entry name" value="Amidohydro_1"/>
    <property type="match status" value="1"/>
</dbReference>
<dbReference type="Pfam" id="PF00449">
    <property type="entry name" value="Urease_alpha"/>
    <property type="match status" value="1"/>
</dbReference>
<dbReference type="PRINTS" id="PR01752">
    <property type="entry name" value="UREASE"/>
</dbReference>
<dbReference type="SUPFAM" id="SSF51338">
    <property type="entry name" value="Composite domain of metallo-dependent hydrolases"/>
    <property type="match status" value="2"/>
</dbReference>
<dbReference type="SUPFAM" id="SSF51556">
    <property type="entry name" value="Metallo-dependent hydrolases"/>
    <property type="match status" value="1"/>
</dbReference>
<dbReference type="PROSITE" id="PS00145">
    <property type="entry name" value="UREASE_2"/>
    <property type="match status" value="1"/>
</dbReference>
<dbReference type="PROSITE" id="PS51368">
    <property type="entry name" value="UREASE_3"/>
    <property type="match status" value="1"/>
</dbReference>
<reference key="1">
    <citation type="journal article" date="2007" name="PLoS Genet.">
        <title>Patterns and implications of gene gain and loss in the evolution of Prochlorococcus.</title>
        <authorList>
            <person name="Kettler G.C."/>
            <person name="Martiny A.C."/>
            <person name="Huang K."/>
            <person name="Zucker J."/>
            <person name="Coleman M.L."/>
            <person name="Rodrigue S."/>
            <person name="Chen F."/>
            <person name="Lapidus A."/>
            <person name="Ferriera S."/>
            <person name="Johnson J."/>
            <person name="Steglich C."/>
            <person name="Church G.M."/>
            <person name="Richardson P."/>
            <person name="Chisholm S.W."/>
        </authorList>
    </citation>
    <scope>NUCLEOTIDE SEQUENCE [LARGE SCALE GENOMIC DNA]</scope>
    <source>
        <strain>MIT 9215</strain>
    </source>
</reference>
<organism>
    <name type="scientific">Prochlorococcus marinus (strain MIT 9215)</name>
    <dbReference type="NCBI Taxonomy" id="93060"/>
    <lineage>
        <taxon>Bacteria</taxon>
        <taxon>Bacillati</taxon>
        <taxon>Cyanobacteriota</taxon>
        <taxon>Cyanophyceae</taxon>
        <taxon>Synechococcales</taxon>
        <taxon>Prochlorococcaceae</taxon>
        <taxon>Prochlorococcus</taxon>
    </lineage>
</organism>
<keyword id="KW-0963">Cytoplasm</keyword>
<keyword id="KW-0378">Hydrolase</keyword>
<keyword id="KW-0479">Metal-binding</keyword>
<keyword id="KW-0533">Nickel</keyword>
<comment type="catalytic activity">
    <reaction evidence="1">
        <text>urea + 2 H2O + H(+) = hydrogencarbonate + 2 NH4(+)</text>
        <dbReference type="Rhea" id="RHEA:20557"/>
        <dbReference type="ChEBI" id="CHEBI:15377"/>
        <dbReference type="ChEBI" id="CHEBI:15378"/>
        <dbReference type="ChEBI" id="CHEBI:16199"/>
        <dbReference type="ChEBI" id="CHEBI:17544"/>
        <dbReference type="ChEBI" id="CHEBI:28938"/>
        <dbReference type="EC" id="3.5.1.5"/>
    </reaction>
</comment>
<comment type="cofactor">
    <cofactor evidence="1">
        <name>Ni cation</name>
        <dbReference type="ChEBI" id="CHEBI:25516"/>
    </cofactor>
    <text evidence="1">Binds 2 nickel ions per subunit.</text>
</comment>
<comment type="pathway">
    <text evidence="1">Nitrogen metabolism; urea degradation; CO(2) and NH(3) from urea (urease route): step 1/1.</text>
</comment>
<comment type="subunit">
    <text evidence="1">Heterotrimer of UreA (gamma), UreB (beta) and UreC (alpha) subunits. Three heterotrimers associate to form the active enzyme.</text>
</comment>
<comment type="subcellular location">
    <subcellularLocation>
        <location evidence="1">Cytoplasm</location>
    </subcellularLocation>
</comment>
<comment type="PTM">
    <text evidence="1">Carboxylation allows a single lysine to coordinate two nickel ions.</text>
</comment>
<comment type="similarity">
    <text evidence="1">Belongs to the metallo-dependent hydrolases superfamily. Urease alpha subunit family.</text>
</comment>
<protein>
    <recommendedName>
        <fullName evidence="1">Urease subunit alpha</fullName>
        <ecNumber evidence="1">3.5.1.5</ecNumber>
    </recommendedName>
    <alternativeName>
        <fullName evidence="1">Urea amidohydrolase subunit alpha</fullName>
    </alternativeName>
</protein>
<name>URE1_PROM2</name>
<evidence type="ECO:0000255" key="1">
    <source>
        <dbReference type="HAMAP-Rule" id="MF_01953"/>
    </source>
</evidence>
<gene>
    <name evidence="1" type="primary">ureC</name>
    <name type="ordered locus">P9215_09251</name>
</gene>
<proteinExistence type="inferred from homology"/>